<gene>
    <name evidence="1" type="primary">murG</name>
    <name type="ordered locus">RER_35520</name>
</gene>
<feature type="chain" id="PRO_1000202027" description="UDP-N-acetylglucosamine--N-acetylmuramyl-(pentapeptide) pyrophosphoryl-undecaprenol N-acetylglucosamine transferase">
    <location>
        <begin position="1"/>
        <end position="389"/>
    </location>
</feature>
<feature type="binding site" evidence="1">
    <location>
        <begin position="17"/>
        <end position="19"/>
    </location>
    <ligand>
        <name>UDP-N-acetyl-alpha-D-glucosamine</name>
        <dbReference type="ChEBI" id="CHEBI:57705"/>
    </ligand>
</feature>
<feature type="binding site" evidence="1">
    <location>
        <position position="137"/>
    </location>
    <ligand>
        <name>UDP-N-acetyl-alpha-D-glucosamine</name>
        <dbReference type="ChEBI" id="CHEBI:57705"/>
    </ligand>
</feature>
<feature type="binding site" evidence="1">
    <location>
        <position position="179"/>
    </location>
    <ligand>
        <name>UDP-N-acetyl-alpha-D-glucosamine</name>
        <dbReference type="ChEBI" id="CHEBI:57705"/>
    </ligand>
</feature>
<feature type="binding site" evidence="1">
    <location>
        <position position="213"/>
    </location>
    <ligand>
        <name>UDP-N-acetyl-alpha-D-glucosamine</name>
        <dbReference type="ChEBI" id="CHEBI:57705"/>
    </ligand>
</feature>
<feature type="binding site" evidence="1">
    <location>
        <position position="308"/>
    </location>
    <ligand>
        <name>UDP-N-acetyl-alpha-D-glucosamine</name>
        <dbReference type="ChEBI" id="CHEBI:57705"/>
    </ligand>
</feature>
<proteinExistence type="inferred from homology"/>
<evidence type="ECO:0000255" key="1">
    <source>
        <dbReference type="HAMAP-Rule" id="MF_00033"/>
    </source>
</evidence>
<name>MURG_RHOE4</name>
<comment type="function">
    <text evidence="1">Cell wall formation. Catalyzes the transfer of a GlcNAc subunit on undecaprenyl-pyrophosphoryl-MurNAc-pentapeptide (lipid intermediate I) to form undecaprenyl-pyrophosphoryl-MurNAc-(pentapeptide)GlcNAc (lipid intermediate II).</text>
</comment>
<comment type="catalytic activity">
    <reaction evidence="1">
        <text>di-trans,octa-cis-undecaprenyl diphospho-N-acetyl-alpha-D-muramoyl-L-alanyl-D-glutamyl-meso-2,6-diaminopimeloyl-D-alanyl-D-alanine + UDP-N-acetyl-alpha-D-glucosamine = di-trans,octa-cis-undecaprenyl diphospho-[N-acetyl-alpha-D-glucosaminyl-(1-&gt;4)]-N-acetyl-alpha-D-muramoyl-L-alanyl-D-glutamyl-meso-2,6-diaminopimeloyl-D-alanyl-D-alanine + UDP + H(+)</text>
        <dbReference type="Rhea" id="RHEA:31227"/>
        <dbReference type="ChEBI" id="CHEBI:15378"/>
        <dbReference type="ChEBI" id="CHEBI:57705"/>
        <dbReference type="ChEBI" id="CHEBI:58223"/>
        <dbReference type="ChEBI" id="CHEBI:61387"/>
        <dbReference type="ChEBI" id="CHEBI:61388"/>
        <dbReference type="EC" id="2.4.1.227"/>
    </reaction>
</comment>
<comment type="pathway">
    <text evidence="1">Cell wall biogenesis; peptidoglycan biosynthesis.</text>
</comment>
<comment type="subcellular location">
    <subcellularLocation>
        <location evidence="1">Cell membrane</location>
        <topology evidence="1">Peripheral membrane protein</topology>
        <orientation evidence="1">Cytoplasmic side</orientation>
    </subcellularLocation>
</comment>
<comment type="similarity">
    <text evidence="1">Belongs to the glycosyltransferase 28 family. MurG subfamily.</text>
</comment>
<organism>
    <name type="scientific">Rhodococcus erythropolis (strain PR4 / NBRC 100887)</name>
    <dbReference type="NCBI Taxonomy" id="234621"/>
    <lineage>
        <taxon>Bacteria</taxon>
        <taxon>Bacillati</taxon>
        <taxon>Actinomycetota</taxon>
        <taxon>Actinomycetes</taxon>
        <taxon>Mycobacteriales</taxon>
        <taxon>Nocardiaceae</taxon>
        <taxon>Rhodococcus</taxon>
        <taxon>Rhodococcus erythropolis group</taxon>
    </lineage>
</organism>
<accession>C1A0X5</accession>
<sequence>MSGNKSALSVVVAGGGTAGHIEPALAVADAVKAAQPDTRITALGTARGLETTLVPARGYTLELIPPVPLPRKPTMDLVKLPTRILASVRKTREVLDSVDADVIVGFGGYVALPAYLAARGGVLRRRRKIPIVIHEANASAGIANKIGARLATRVLAAVPGSGVKNRGDQDAEIVGIPVRASIANFDRAGLRSQAREYFGLPQDGPVLLVFGGSQGAKSLNDAVSGAAEELAKAGISVLHAHGPKNSLEVTQYSETAPYVAVPYLSRMDLAYAAADATICRSGAMTVAEVSAVGLPAVYVPLPHGNGEQELNAKPVVAAGGAIIVSDNELTPTFVAGTVVPMLSDSARLDKMSSGAANVGHRTAATEIARIVLDIAAKENAVQENARGNR</sequence>
<dbReference type="EC" id="2.4.1.227" evidence="1"/>
<dbReference type="EMBL" id="AP008957">
    <property type="protein sequence ID" value="BAH34260.1"/>
    <property type="molecule type" value="Genomic_DNA"/>
</dbReference>
<dbReference type="RefSeq" id="WP_019748872.1">
    <property type="nucleotide sequence ID" value="NC_012490.1"/>
</dbReference>
<dbReference type="SMR" id="C1A0X5"/>
<dbReference type="CAZy" id="GT28">
    <property type="family name" value="Glycosyltransferase Family 28"/>
</dbReference>
<dbReference type="GeneID" id="57486550"/>
<dbReference type="KEGG" id="rer:RER_35520"/>
<dbReference type="eggNOG" id="COG0707">
    <property type="taxonomic scope" value="Bacteria"/>
</dbReference>
<dbReference type="HOGENOM" id="CLU_037404_1_0_11"/>
<dbReference type="UniPathway" id="UPA00219"/>
<dbReference type="Proteomes" id="UP000002204">
    <property type="component" value="Chromosome"/>
</dbReference>
<dbReference type="GO" id="GO:0005886">
    <property type="term" value="C:plasma membrane"/>
    <property type="evidence" value="ECO:0007669"/>
    <property type="project" value="UniProtKB-SubCell"/>
</dbReference>
<dbReference type="GO" id="GO:0051991">
    <property type="term" value="F:UDP-N-acetyl-D-glucosamine:N-acetylmuramoyl-L-alanyl-D-glutamyl-meso-2,6-diaminopimelyl-D-alanyl-D-alanine-diphosphoundecaprenol 4-beta-N-acetylglucosaminlytransferase activity"/>
    <property type="evidence" value="ECO:0007669"/>
    <property type="project" value="RHEA"/>
</dbReference>
<dbReference type="GO" id="GO:0050511">
    <property type="term" value="F:undecaprenyldiphospho-muramoylpentapeptide beta-N-acetylglucosaminyltransferase activity"/>
    <property type="evidence" value="ECO:0007669"/>
    <property type="project" value="UniProtKB-UniRule"/>
</dbReference>
<dbReference type="GO" id="GO:0005975">
    <property type="term" value="P:carbohydrate metabolic process"/>
    <property type="evidence" value="ECO:0007669"/>
    <property type="project" value="InterPro"/>
</dbReference>
<dbReference type="GO" id="GO:0051301">
    <property type="term" value="P:cell division"/>
    <property type="evidence" value="ECO:0007669"/>
    <property type="project" value="UniProtKB-KW"/>
</dbReference>
<dbReference type="GO" id="GO:0071555">
    <property type="term" value="P:cell wall organization"/>
    <property type="evidence" value="ECO:0007669"/>
    <property type="project" value="UniProtKB-KW"/>
</dbReference>
<dbReference type="GO" id="GO:0030259">
    <property type="term" value="P:lipid glycosylation"/>
    <property type="evidence" value="ECO:0007669"/>
    <property type="project" value="UniProtKB-UniRule"/>
</dbReference>
<dbReference type="GO" id="GO:0009252">
    <property type="term" value="P:peptidoglycan biosynthetic process"/>
    <property type="evidence" value="ECO:0007669"/>
    <property type="project" value="UniProtKB-UniRule"/>
</dbReference>
<dbReference type="GO" id="GO:0008360">
    <property type="term" value="P:regulation of cell shape"/>
    <property type="evidence" value="ECO:0007669"/>
    <property type="project" value="UniProtKB-KW"/>
</dbReference>
<dbReference type="CDD" id="cd03785">
    <property type="entry name" value="GT28_MurG"/>
    <property type="match status" value="1"/>
</dbReference>
<dbReference type="Gene3D" id="3.40.50.2000">
    <property type="entry name" value="Glycogen Phosphorylase B"/>
    <property type="match status" value="2"/>
</dbReference>
<dbReference type="HAMAP" id="MF_00033">
    <property type="entry name" value="MurG"/>
    <property type="match status" value="1"/>
</dbReference>
<dbReference type="InterPro" id="IPR006009">
    <property type="entry name" value="GlcNAc_MurG"/>
</dbReference>
<dbReference type="InterPro" id="IPR007235">
    <property type="entry name" value="Glyco_trans_28_C"/>
</dbReference>
<dbReference type="InterPro" id="IPR004276">
    <property type="entry name" value="GlycoTrans_28_N"/>
</dbReference>
<dbReference type="NCBIfam" id="TIGR01133">
    <property type="entry name" value="murG"/>
    <property type="match status" value="1"/>
</dbReference>
<dbReference type="PANTHER" id="PTHR21015:SF22">
    <property type="entry name" value="GLYCOSYLTRANSFERASE"/>
    <property type="match status" value="1"/>
</dbReference>
<dbReference type="PANTHER" id="PTHR21015">
    <property type="entry name" value="UDP-N-ACETYLGLUCOSAMINE--N-ACETYLMURAMYL-(PENTAPEPTIDE) PYROPHOSPHORYL-UNDECAPRENOL N-ACETYLGLUCOSAMINE TRANSFERASE 1"/>
    <property type="match status" value="1"/>
</dbReference>
<dbReference type="Pfam" id="PF04101">
    <property type="entry name" value="Glyco_tran_28_C"/>
    <property type="match status" value="1"/>
</dbReference>
<dbReference type="Pfam" id="PF03033">
    <property type="entry name" value="Glyco_transf_28"/>
    <property type="match status" value="1"/>
</dbReference>
<dbReference type="SUPFAM" id="SSF53756">
    <property type="entry name" value="UDP-Glycosyltransferase/glycogen phosphorylase"/>
    <property type="match status" value="1"/>
</dbReference>
<reference key="1">
    <citation type="submission" date="2005-03" db="EMBL/GenBank/DDBJ databases">
        <title>Comparison of the complete genome sequences of Rhodococcus erythropolis PR4 and Rhodococcus opacus B4.</title>
        <authorList>
            <person name="Takarada H."/>
            <person name="Sekine M."/>
            <person name="Hosoyama A."/>
            <person name="Yamada R."/>
            <person name="Fujisawa T."/>
            <person name="Omata S."/>
            <person name="Shimizu A."/>
            <person name="Tsukatani N."/>
            <person name="Tanikawa S."/>
            <person name="Fujita N."/>
            <person name="Harayama S."/>
        </authorList>
    </citation>
    <scope>NUCLEOTIDE SEQUENCE [LARGE SCALE GENOMIC DNA]</scope>
    <source>
        <strain>PR4 / NBRC 100887</strain>
    </source>
</reference>
<protein>
    <recommendedName>
        <fullName evidence="1">UDP-N-acetylglucosamine--N-acetylmuramyl-(pentapeptide) pyrophosphoryl-undecaprenol N-acetylglucosamine transferase</fullName>
        <ecNumber evidence="1">2.4.1.227</ecNumber>
    </recommendedName>
    <alternativeName>
        <fullName evidence="1">Undecaprenyl-PP-MurNAc-pentapeptide-UDPGlcNAc GlcNAc transferase</fullName>
    </alternativeName>
</protein>
<keyword id="KW-0131">Cell cycle</keyword>
<keyword id="KW-0132">Cell division</keyword>
<keyword id="KW-1003">Cell membrane</keyword>
<keyword id="KW-0133">Cell shape</keyword>
<keyword id="KW-0961">Cell wall biogenesis/degradation</keyword>
<keyword id="KW-0328">Glycosyltransferase</keyword>
<keyword id="KW-0472">Membrane</keyword>
<keyword id="KW-0573">Peptidoglycan synthesis</keyword>
<keyword id="KW-0808">Transferase</keyword>